<sequence>MAGGQIEKLVKYKSTVKDPGTPGFLRIREGMLLFVPNDPKSDSKLKVLTQNIKSQKYTKEGSNKPPWLNLTNKQAKSHIFEFENYPDMHACRDFITKALAKCELEPNKSVVSTSSEQLSIKELELRFKLLRENSELQRLHKQFVESKVLTEDEFWATRKKLLGKDSIRKSKQQLGLKSMMVSGIKPSTDGRTNRVTFNLTPEIIFQIFAEKPAVRQAFINYVPSKMTEKDFWTKYFRAEYLYSTKNTAVAAAEAAEDEELAVFLKPDEILARETRHKIRRVDPTLDMEADQGDDYTHLMDHGIQRDGTMDVVEPQNDQFKRSLLQDLNRHAAVVLEGRSIDVESEDTRIVAEALTRVKQVSKADGETTKDANQERLERMSRVAGMEDLQAPQNFPLAPLSIKDPRDYFESQQGNVLNVPRGAKGLKRNVHEAYGLLKESILEIRATGLSDPLIKPEVSFEVFSSLTRTIATAKNINGKNPRESFLDRLPKSTKDEVLHHWTSIQELLKHFWSSYPITTTYLHTKVGKLKDAMSNTYSKLEAMKESVQSDLRHQVSLLVRPMQQALDAAFHHYEVDLQRRTAKSGERPNGYV</sequence>
<gene>
    <name evidence="4" type="primary">TFB1-1</name>
    <name evidence="4" type="synonym">GTF2H1-1</name>
    <name type="ordered locus">At1g55750</name>
    <name type="ORF">F20N2.15</name>
</gene>
<name>TFB1A_ARATH</name>
<evidence type="ECO:0000250" key="1">
    <source>
        <dbReference type="UniProtKB" id="P32780"/>
    </source>
</evidence>
<evidence type="ECO:0000255" key="2">
    <source>
        <dbReference type="PROSITE-ProRule" id="PRU00036"/>
    </source>
</evidence>
<evidence type="ECO:0000303" key="3">
    <source>
    </source>
</evidence>
<evidence type="ECO:0000305" key="4"/>
<evidence type="ECO:0000305" key="5">
    <source>
    </source>
</evidence>
<dbReference type="EMBL" id="AC002328">
    <property type="protein sequence ID" value="AAF79503.1"/>
    <property type="status" value="ALT_SEQ"/>
    <property type="molecule type" value="Genomic_DNA"/>
</dbReference>
<dbReference type="EMBL" id="CP002684">
    <property type="protein sequence ID" value="AEE33293.1"/>
    <property type="molecule type" value="Genomic_DNA"/>
</dbReference>
<dbReference type="EMBL" id="CP002684">
    <property type="protein sequence ID" value="ANM59713.1"/>
    <property type="molecule type" value="Genomic_DNA"/>
</dbReference>
<dbReference type="EMBL" id="AK226523">
    <property type="protein sequence ID" value="BAE98663.1"/>
    <property type="molecule type" value="mRNA"/>
</dbReference>
<dbReference type="RefSeq" id="NP_001319242.1">
    <property type="nucleotide sequence ID" value="NM_001333725.1"/>
</dbReference>
<dbReference type="RefSeq" id="NP_175971.3">
    <property type="nucleotide sequence ID" value="NM_104451.4"/>
</dbReference>
<dbReference type="SMR" id="Q3ECP0"/>
<dbReference type="BioGRID" id="27249">
    <property type="interactions" value="7"/>
</dbReference>
<dbReference type="FunCoup" id="Q3ECP0">
    <property type="interactions" value="4419"/>
</dbReference>
<dbReference type="IntAct" id="Q3ECP0">
    <property type="interactions" value="7"/>
</dbReference>
<dbReference type="STRING" id="3702.Q3ECP0"/>
<dbReference type="GlyGen" id="Q3ECP0">
    <property type="glycosylation" value="1 site"/>
</dbReference>
<dbReference type="PaxDb" id="3702-AT1G55750.1"/>
<dbReference type="ProteomicsDB" id="234406"/>
<dbReference type="EnsemblPlants" id="AT1G55750.1">
    <property type="protein sequence ID" value="AT1G55750.1"/>
    <property type="gene ID" value="AT1G55750"/>
</dbReference>
<dbReference type="EnsemblPlants" id="AT1G55750.6">
    <property type="protein sequence ID" value="AT1G55750.6"/>
    <property type="gene ID" value="AT1G55750"/>
</dbReference>
<dbReference type="GeneID" id="842024"/>
<dbReference type="Gramene" id="AT1G55750.1">
    <property type="protein sequence ID" value="AT1G55750.1"/>
    <property type="gene ID" value="AT1G55750"/>
</dbReference>
<dbReference type="Gramene" id="AT1G55750.6">
    <property type="protein sequence ID" value="AT1G55750.6"/>
    <property type="gene ID" value="AT1G55750"/>
</dbReference>
<dbReference type="KEGG" id="ath:AT1G55750"/>
<dbReference type="Araport" id="AT1G55750"/>
<dbReference type="TAIR" id="AT1G55750"/>
<dbReference type="eggNOG" id="KOG2074">
    <property type="taxonomic scope" value="Eukaryota"/>
</dbReference>
<dbReference type="HOGENOM" id="CLU_017639_2_0_1"/>
<dbReference type="InParanoid" id="Q3ECP0"/>
<dbReference type="OMA" id="VCTCELL"/>
<dbReference type="PhylomeDB" id="Q3ECP0"/>
<dbReference type="CD-CODE" id="4299E36E">
    <property type="entry name" value="Nucleolus"/>
</dbReference>
<dbReference type="PRO" id="PR:Q3ECP0"/>
<dbReference type="Proteomes" id="UP000006548">
    <property type="component" value="Chromosome 1"/>
</dbReference>
<dbReference type="ExpressionAtlas" id="Q3ECP0">
    <property type="expression patterns" value="baseline and differential"/>
</dbReference>
<dbReference type="GO" id="GO:0000439">
    <property type="term" value="C:transcription factor TFIIH core complex"/>
    <property type="evidence" value="ECO:0007669"/>
    <property type="project" value="InterPro"/>
</dbReference>
<dbReference type="GO" id="GO:0006351">
    <property type="term" value="P:DNA-templated transcription"/>
    <property type="evidence" value="ECO:0007669"/>
    <property type="project" value="InterPro"/>
</dbReference>
<dbReference type="GO" id="GO:0006289">
    <property type="term" value="P:nucleotide-excision repair"/>
    <property type="evidence" value="ECO:0007669"/>
    <property type="project" value="InterPro"/>
</dbReference>
<dbReference type="FunFam" id="1.10.3970.10:FF:000002">
    <property type="entry name" value="Putative RNA polymerase II transcription factor B subunit 1-1"/>
    <property type="match status" value="1"/>
</dbReference>
<dbReference type="Gene3D" id="6.10.140.1200">
    <property type="match status" value="1"/>
</dbReference>
<dbReference type="Gene3D" id="1.10.3970.10">
    <property type="entry name" value="BSD domain"/>
    <property type="match status" value="1"/>
</dbReference>
<dbReference type="InterPro" id="IPR005607">
    <property type="entry name" value="BSD_dom"/>
</dbReference>
<dbReference type="InterPro" id="IPR035925">
    <property type="entry name" value="BSD_dom_sf"/>
</dbReference>
<dbReference type="InterPro" id="IPR027079">
    <property type="entry name" value="Tfb1/GTF2H1"/>
</dbReference>
<dbReference type="InterPro" id="IPR013876">
    <property type="entry name" value="TFIIH_BTF_p62_N"/>
</dbReference>
<dbReference type="PANTHER" id="PTHR12856">
    <property type="entry name" value="TRANSCRIPTION INITIATION FACTOR IIH-RELATED"/>
    <property type="match status" value="1"/>
</dbReference>
<dbReference type="Pfam" id="PF03909">
    <property type="entry name" value="BSD"/>
    <property type="match status" value="1"/>
</dbReference>
<dbReference type="Pfam" id="PF08567">
    <property type="entry name" value="PH_TFIIH"/>
    <property type="match status" value="1"/>
</dbReference>
<dbReference type="SMART" id="SM00751">
    <property type="entry name" value="BSD"/>
    <property type="match status" value="2"/>
</dbReference>
<dbReference type="SUPFAM" id="SSF140383">
    <property type="entry name" value="BSD domain-like"/>
    <property type="match status" value="2"/>
</dbReference>
<dbReference type="SUPFAM" id="SSF50729">
    <property type="entry name" value="PH domain-like"/>
    <property type="match status" value="1"/>
</dbReference>
<dbReference type="PROSITE" id="PS50858">
    <property type="entry name" value="BSD"/>
    <property type="match status" value="2"/>
</dbReference>
<feature type="chain" id="PRO_0000406092" description="General transcription and DNA repair factor IIH subunit TFB1-1">
    <location>
        <begin position="1"/>
        <end position="591"/>
    </location>
</feature>
<feature type="domain" description="BSD 1" evidence="2">
    <location>
        <begin position="112"/>
        <end position="166"/>
    </location>
</feature>
<feature type="domain" description="BSD 2" evidence="2">
    <location>
        <begin position="191"/>
        <end position="243"/>
    </location>
</feature>
<proteinExistence type="evidence at transcript level"/>
<reference key="1">
    <citation type="journal article" date="2000" name="Nature">
        <title>Sequence and analysis of chromosome 1 of the plant Arabidopsis thaliana.</title>
        <authorList>
            <person name="Theologis A."/>
            <person name="Ecker J.R."/>
            <person name="Palm C.J."/>
            <person name="Federspiel N.A."/>
            <person name="Kaul S."/>
            <person name="White O."/>
            <person name="Alonso J."/>
            <person name="Altafi H."/>
            <person name="Araujo R."/>
            <person name="Bowman C.L."/>
            <person name="Brooks S.Y."/>
            <person name="Buehler E."/>
            <person name="Chan A."/>
            <person name="Chao Q."/>
            <person name="Chen H."/>
            <person name="Cheuk R.F."/>
            <person name="Chin C.W."/>
            <person name="Chung M.K."/>
            <person name="Conn L."/>
            <person name="Conway A.B."/>
            <person name="Conway A.R."/>
            <person name="Creasy T.H."/>
            <person name="Dewar K."/>
            <person name="Dunn P."/>
            <person name="Etgu P."/>
            <person name="Feldblyum T.V."/>
            <person name="Feng J.-D."/>
            <person name="Fong B."/>
            <person name="Fujii C.Y."/>
            <person name="Gill J.E."/>
            <person name="Goldsmith A.D."/>
            <person name="Haas B."/>
            <person name="Hansen N.F."/>
            <person name="Hughes B."/>
            <person name="Huizar L."/>
            <person name="Hunter J.L."/>
            <person name="Jenkins J."/>
            <person name="Johnson-Hopson C."/>
            <person name="Khan S."/>
            <person name="Khaykin E."/>
            <person name="Kim C.J."/>
            <person name="Koo H.L."/>
            <person name="Kremenetskaia I."/>
            <person name="Kurtz D.B."/>
            <person name="Kwan A."/>
            <person name="Lam B."/>
            <person name="Langin-Hooper S."/>
            <person name="Lee A."/>
            <person name="Lee J.M."/>
            <person name="Lenz C.A."/>
            <person name="Li J.H."/>
            <person name="Li Y.-P."/>
            <person name="Lin X."/>
            <person name="Liu S.X."/>
            <person name="Liu Z.A."/>
            <person name="Luros J.S."/>
            <person name="Maiti R."/>
            <person name="Marziali A."/>
            <person name="Militscher J."/>
            <person name="Miranda M."/>
            <person name="Nguyen M."/>
            <person name="Nierman W.C."/>
            <person name="Osborne B.I."/>
            <person name="Pai G."/>
            <person name="Peterson J."/>
            <person name="Pham P.K."/>
            <person name="Rizzo M."/>
            <person name="Rooney T."/>
            <person name="Rowley D."/>
            <person name="Sakano H."/>
            <person name="Salzberg S.L."/>
            <person name="Schwartz J.R."/>
            <person name="Shinn P."/>
            <person name="Southwick A.M."/>
            <person name="Sun H."/>
            <person name="Tallon L.J."/>
            <person name="Tambunga G."/>
            <person name="Toriumi M.J."/>
            <person name="Town C.D."/>
            <person name="Utterback T."/>
            <person name="Van Aken S."/>
            <person name="Vaysberg M."/>
            <person name="Vysotskaia V.S."/>
            <person name="Walker M."/>
            <person name="Wu D."/>
            <person name="Yu G."/>
            <person name="Fraser C.M."/>
            <person name="Venter J.C."/>
            <person name="Davis R.W."/>
        </authorList>
    </citation>
    <scope>NUCLEOTIDE SEQUENCE [LARGE SCALE GENOMIC DNA]</scope>
    <source>
        <strain>cv. Columbia</strain>
    </source>
</reference>
<reference key="2">
    <citation type="journal article" date="2017" name="Plant J.">
        <title>Araport11: a complete reannotation of the Arabidopsis thaliana reference genome.</title>
        <authorList>
            <person name="Cheng C.Y."/>
            <person name="Krishnakumar V."/>
            <person name="Chan A.P."/>
            <person name="Thibaud-Nissen F."/>
            <person name="Schobel S."/>
            <person name="Town C.D."/>
        </authorList>
    </citation>
    <scope>GENOME REANNOTATION</scope>
    <source>
        <strain>cv. Columbia</strain>
    </source>
</reference>
<reference key="3">
    <citation type="submission" date="2006-07" db="EMBL/GenBank/DDBJ databases">
        <title>Large-scale analysis of RIKEN Arabidopsis full-length (RAFL) cDNAs.</title>
        <authorList>
            <person name="Totoki Y."/>
            <person name="Seki M."/>
            <person name="Ishida J."/>
            <person name="Nakajima M."/>
            <person name="Enju A."/>
            <person name="Kamiya A."/>
            <person name="Narusaka M."/>
            <person name="Shin-i T."/>
            <person name="Nakagawa M."/>
            <person name="Sakamoto N."/>
            <person name="Oishi K."/>
            <person name="Kohara Y."/>
            <person name="Kobayashi M."/>
            <person name="Toyoda A."/>
            <person name="Sakaki Y."/>
            <person name="Sakurai T."/>
            <person name="Iida K."/>
            <person name="Akiyama K."/>
            <person name="Satou M."/>
            <person name="Toyoda T."/>
            <person name="Konagaya A."/>
            <person name="Carninci P."/>
            <person name="Kawai J."/>
            <person name="Hayashizaki Y."/>
            <person name="Shinozaki K."/>
        </authorList>
    </citation>
    <scope>NUCLEOTIDE SEQUENCE [LARGE SCALE MRNA]</scope>
    <source>
        <strain>cv. Columbia</strain>
    </source>
</reference>
<reference key="4">
    <citation type="journal article" date="2005" name="Environ. Mol. Mutagen.">
        <title>Components of nucleotide excision repair and DNA damage tolerance in Arabidopsis thaliana.</title>
        <authorList>
            <person name="Kunz B.A."/>
            <person name="Anderson H.J."/>
            <person name="Osmond M.J."/>
            <person name="Vonarx E.J."/>
        </authorList>
    </citation>
    <scope>COMPONENT OF TFIIH CORE COMPLEX</scope>
    <scope>NOMENCLATURE</scope>
</reference>
<comment type="function">
    <text evidence="1">Component of the general transcription and DNA repair factor IIH (TFIIH) core complex, which is involved in general and transcription-coupled nucleotide excision repair (NER) of damaged DNA and, when complexed to CAK, in RNA transcription by RNA polymerase II. In NER, TFIIH acts by opening DNA around the lesion to allow the excision of the damaged oligonucleotide and its replacement by a new DNA fragment. In transcription, TFIIH has an essential role in transcription initiation. When the pre-initiation complex (PIC) has been established, TFIIH is required for promoter opening and promoter escape. Phosphorylation of the C-terminal tail (CTD) of the largest subunit of RNA polymerase II by the kinase module CAK controls the initiation of transcription.</text>
</comment>
<comment type="subunit">
    <text evidence="1 5">Component of the 7-subunit TFIIH core complex composed of XPB, XPD, TFB1/GTF2H1, GTF2H2/P44, TFB4/GTF2H3, TFB2/GTF2H4 and TFB5/GTF2H5, which is active in NER. The core complex associates with the 3-subunit CDK-activating kinase (CAK) module composed of CYCH1/cyclin H1, CDKD and MAT1/At4g30820 to form the 10-subunit holoenzyme (holo-TFIIH) active in transcription.</text>
</comment>
<comment type="subcellular location">
    <subcellularLocation>
        <location evidence="4">Nucleus</location>
    </subcellularLocation>
</comment>
<comment type="similarity">
    <text evidence="4">Belongs to the TFB1 family.</text>
</comment>
<comment type="sequence caution" evidence="4">
    <conflict type="erroneous gene model prediction">
        <sequence resource="EMBL-CDS" id="AAF79503"/>
    </conflict>
    <text>The predicted gene has been split into 2 genes: At1g55750 and At1g55760.</text>
</comment>
<accession>Q3ECP0</accession>
<accession>Q9LFZ6</accession>
<keyword id="KW-0227">DNA damage</keyword>
<keyword id="KW-0234">DNA repair</keyword>
<keyword id="KW-0539">Nucleus</keyword>
<keyword id="KW-1185">Reference proteome</keyword>
<keyword id="KW-0677">Repeat</keyword>
<keyword id="KW-0804">Transcription</keyword>
<keyword id="KW-0805">Transcription regulation</keyword>
<organism>
    <name type="scientific">Arabidopsis thaliana</name>
    <name type="common">Mouse-ear cress</name>
    <dbReference type="NCBI Taxonomy" id="3702"/>
    <lineage>
        <taxon>Eukaryota</taxon>
        <taxon>Viridiplantae</taxon>
        <taxon>Streptophyta</taxon>
        <taxon>Embryophyta</taxon>
        <taxon>Tracheophyta</taxon>
        <taxon>Spermatophyta</taxon>
        <taxon>Magnoliopsida</taxon>
        <taxon>eudicotyledons</taxon>
        <taxon>Gunneridae</taxon>
        <taxon>Pentapetalae</taxon>
        <taxon>rosids</taxon>
        <taxon>malvids</taxon>
        <taxon>Brassicales</taxon>
        <taxon>Brassicaceae</taxon>
        <taxon>Camelineae</taxon>
        <taxon>Arabidopsis</taxon>
    </lineage>
</organism>
<protein>
    <recommendedName>
        <fullName>General transcription and DNA repair factor IIH subunit TFB1-1</fullName>
        <shortName evidence="3">AtTFB1-1</shortName>
        <shortName>TFIIH subunit TFB1-1</shortName>
    </recommendedName>
    <alternativeName>
        <fullName>RNA polymerase II transcription factor B subunit 1-1</fullName>
    </alternativeName>
</protein>